<sequence>MTGFFTILSFSLAALSVTNAAQILSVPKGAEVVPNGYIVVMKDDTSQQDFSSHRVWISSIHHNMTRRGLDGAGVKQTYDFDHLRGYSGIFDEDTIKDISNDPKVAFVEPDAIISQHVVVQQRKAPWGLSRLSNRRGGRNYVFDSSAGSGVWAYVVDSGVDVRHSEFQGRAVWGSNLVDNKNSDGTGHGTHVAGTIAGKTYGIAKNAKVVAVKVLNSEGKGPTSGIIAGINWSIRHARKHGMLQKSVLNMSLGGTYSAGLNHATAQAIKAGMFVSVSAGNDNINSNGNSPASERSVCTIAASTENDGKASFSNWGPAVDLYAPGHNILSARPGGGSQTMSGTSMAAPHAAGVAAYLIAKEGIPGNRACLRLKQLSQPTIRNPGPDTTSRLLYNGSGR</sequence>
<protein>
    <recommendedName>
        <fullName>Subtilisin-like protease 5</fullName>
        <ecNumber>3.4.21.-</ecNumber>
    </recommendedName>
</protein>
<name>SUB5_ARTBC</name>
<organism>
    <name type="scientific">Arthroderma benhamiae (strain ATCC MYA-4681 / CBS 112371)</name>
    <name type="common">Trichophyton mentagrophytes</name>
    <dbReference type="NCBI Taxonomy" id="663331"/>
    <lineage>
        <taxon>Eukaryota</taxon>
        <taxon>Fungi</taxon>
        <taxon>Dikarya</taxon>
        <taxon>Ascomycota</taxon>
        <taxon>Pezizomycotina</taxon>
        <taxon>Eurotiomycetes</taxon>
        <taxon>Eurotiomycetidae</taxon>
        <taxon>Onygenales</taxon>
        <taxon>Arthrodermataceae</taxon>
        <taxon>Trichophyton</taxon>
    </lineage>
</organism>
<proteinExistence type="inferred from homology"/>
<reference key="1">
    <citation type="journal article" date="2011" name="Genome Biol.">
        <title>Comparative and functional genomics provide insights into the pathogenicity of dermatophytic fungi.</title>
        <authorList>
            <person name="Burmester A."/>
            <person name="Shelest E."/>
            <person name="Gloeckner G."/>
            <person name="Heddergott C."/>
            <person name="Schindler S."/>
            <person name="Staib P."/>
            <person name="Heidel A."/>
            <person name="Felder M."/>
            <person name="Petzold A."/>
            <person name="Szafranski K."/>
            <person name="Feuermann M."/>
            <person name="Pedruzzi I."/>
            <person name="Priebe S."/>
            <person name="Groth M."/>
            <person name="Winkler R."/>
            <person name="Li W."/>
            <person name="Kniemeyer O."/>
            <person name="Schroeckh V."/>
            <person name="Hertweck C."/>
            <person name="Hube B."/>
            <person name="White T.C."/>
            <person name="Platzer M."/>
            <person name="Guthke R."/>
            <person name="Heitman J."/>
            <person name="Woestemeyer J."/>
            <person name="Zipfel P.F."/>
            <person name="Monod M."/>
            <person name="Brakhage A.A."/>
        </authorList>
    </citation>
    <scope>NUCLEOTIDE SEQUENCE [LARGE SCALE GENOMIC DNA]</scope>
    <source>
        <strain>ATCC MYA-4681 / CBS 112371</strain>
    </source>
</reference>
<accession>D4B194</accession>
<evidence type="ECO:0000250" key="1"/>
<evidence type="ECO:0000255" key="2"/>
<evidence type="ECO:0000255" key="3">
    <source>
        <dbReference type="PROSITE-ProRule" id="PRU01240"/>
    </source>
</evidence>
<evidence type="ECO:0000256" key="4">
    <source>
        <dbReference type="SAM" id="MobiDB-lite"/>
    </source>
</evidence>
<evidence type="ECO:0000305" key="5"/>
<gene>
    <name type="primary">SUB5</name>
    <name type="ORF">ARB_02223</name>
</gene>
<keyword id="KW-0325">Glycoprotein</keyword>
<keyword id="KW-0378">Hydrolase</keyword>
<keyword id="KW-0645">Protease</keyword>
<keyword id="KW-1185">Reference proteome</keyword>
<keyword id="KW-0964">Secreted</keyword>
<keyword id="KW-0720">Serine protease</keyword>
<keyword id="KW-0732">Signal</keyword>
<keyword id="KW-0843">Virulence</keyword>
<keyword id="KW-0865">Zymogen</keyword>
<feature type="signal peptide" evidence="2">
    <location>
        <begin position="1"/>
        <end position="20"/>
    </location>
</feature>
<feature type="propeptide" id="PRO_0000397794" evidence="1">
    <location>
        <begin position="21"/>
        <end position="116"/>
    </location>
</feature>
<feature type="chain" id="PRO_0000397795" description="Subtilisin-like protease 5">
    <location>
        <begin position="117"/>
        <end position="396"/>
    </location>
</feature>
<feature type="domain" description="Inhibitor I9" evidence="2">
    <location>
        <begin position="37"/>
        <end position="113"/>
    </location>
</feature>
<feature type="domain" description="Peptidase S8" evidence="3">
    <location>
        <begin position="125"/>
        <end position="396"/>
    </location>
</feature>
<feature type="region of interest" description="Disordered" evidence="4">
    <location>
        <begin position="376"/>
        <end position="396"/>
    </location>
</feature>
<feature type="compositionally biased region" description="Polar residues" evidence="4">
    <location>
        <begin position="376"/>
        <end position="389"/>
    </location>
</feature>
<feature type="active site" description="Charge relay system" evidence="3">
    <location>
        <position position="156"/>
    </location>
</feature>
<feature type="active site" description="Charge relay system" evidence="3">
    <location>
        <position position="187"/>
    </location>
</feature>
<feature type="active site" description="Charge relay system" evidence="3">
    <location>
        <position position="342"/>
    </location>
</feature>
<feature type="glycosylation site" description="N-linked (GlcNAc...) asparagine" evidence="2">
    <location>
        <position position="230"/>
    </location>
</feature>
<feature type="glycosylation site" description="N-linked (GlcNAc...) asparagine" evidence="2">
    <location>
        <position position="248"/>
    </location>
</feature>
<feature type="glycosylation site" description="N-linked (GlcNAc...) asparagine" evidence="2">
    <location>
        <position position="392"/>
    </location>
</feature>
<comment type="function">
    <text evidence="1">Secreted subtilisin-like serine protease with keratinolytic activity that contributes to pathogenicity.</text>
</comment>
<comment type="subcellular location">
    <subcellularLocation>
        <location evidence="1">Secreted</location>
    </subcellularLocation>
</comment>
<comment type="similarity">
    <text evidence="5">Belongs to the peptidase S8 family.</text>
</comment>
<dbReference type="EC" id="3.4.21.-"/>
<dbReference type="EMBL" id="ABSU01000025">
    <property type="protein sequence ID" value="EFE31029.1"/>
    <property type="molecule type" value="Genomic_DNA"/>
</dbReference>
<dbReference type="RefSeq" id="XP_003011669.1">
    <property type="nucleotide sequence ID" value="XM_003011623.1"/>
</dbReference>
<dbReference type="SMR" id="D4B194"/>
<dbReference type="GlyCosmos" id="D4B194">
    <property type="glycosylation" value="3 sites, No reported glycans"/>
</dbReference>
<dbReference type="GeneID" id="9523440"/>
<dbReference type="KEGG" id="abe:ARB_02223"/>
<dbReference type="eggNOG" id="KOG1153">
    <property type="taxonomic scope" value="Eukaryota"/>
</dbReference>
<dbReference type="HOGENOM" id="CLU_011263_1_3_1"/>
<dbReference type="OMA" id="DLYAPGH"/>
<dbReference type="OrthoDB" id="206201at2759"/>
<dbReference type="Proteomes" id="UP000008866">
    <property type="component" value="Unassembled WGS sequence"/>
</dbReference>
<dbReference type="GO" id="GO:0005576">
    <property type="term" value="C:extracellular region"/>
    <property type="evidence" value="ECO:0007669"/>
    <property type="project" value="UniProtKB-SubCell"/>
</dbReference>
<dbReference type="GO" id="GO:0004252">
    <property type="term" value="F:serine-type endopeptidase activity"/>
    <property type="evidence" value="ECO:0007669"/>
    <property type="project" value="InterPro"/>
</dbReference>
<dbReference type="GO" id="GO:0006508">
    <property type="term" value="P:proteolysis"/>
    <property type="evidence" value="ECO:0007669"/>
    <property type="project" value="UniProtKB-KW"/>
</dbReference>
<dbReference type="CDD" id="cd04077">
    <property type="entry name" value="Peptidases_S8_PCSK9_ProteinaseK_like"/>
    <property type="match status" value="1"/>
</dbReference>
<dbReference type="FunFam" id="3.40.50.200:FF:000014">
    <property type="entry name" value="Proteinase K"/>
    <property type="match status" value="1"/>
</dbReference>
<dbReference type="Gene3D" id="3.30.70.80">
    <property type="entry name" value="Peptidase S8 propeptide/proteinase inhibitor I9"/>
    <property type="match status" value="1"/>
</dbReference>
<dbReference type="Gene3D" id="3.40.50.200">
    <property type="entry name" value="Peptidase S8/S53 domain"/>
    <property type="match status" value="1"/>
</dbReference>
<dbReference type="InterPro" id="IPR034193">
    <property type="entry name" value="PCSK9_ProteinaseK-like"/>
</dbReference>
<dbReference type="InterPro" id="IPR000209">
    <property type="entry name" value="Peptidase_S8/S53_dom"/>
</dbReference>
<dbReference type="InterPro" id="IPR036852">
    <property type="entry name" value="Peptidase_S8/S53_dom_sf"/>
</dbReference>
<dbReference type="InterPro" id="IPR023827">
    <property type="entry name" value="Peptidase_S8_Asp-AS"/>
</dbReference>
<dbReference type="InterPro" id="IPR022398">
    <property type="entry name" value="Peptidase_S8_His-AS"/>
</dbReference>
<dbReference type="InterPro" id="IPR023828">
    <property type="entry name" value="Peptidase_S8_Ser-AS"/>
</dbReference>
<dbReference type="InterPro" id="IPR050131">
    <property type="entry name" value="Peptidase_S8_subtilisin-like"/>
</dbReference>
<dbReference type="InterPro" id="IPR015500">
    <property type="entry name" value="Peptidase_S8_subtilisin-rel"/>
</dbReference>
<dbReference type="InterPro" id="IPR010259">
    <property type="entry name" value="S8pro/Inhibitor_I9"/>
</dbReference>
<dbReference type="InterPro" id="IPR037045">
    <property type="entry name" value="S8pro/Inhibitor_I9_sf"/>
</dbReference>
<dbReference type="PANTHER" id="PTHR43806:SF58">
    <property type="entry name" value="ALKALINE PROTEASE 1-RELATED"/>
    <property type="match status" value="1"/>
</dbReference>
<dbReference type="PANTHER" id="PTHR43806">
    <property type="entry name" value="PEPTIDASE S8"/>
    <property type="match status" value="1"/>
</dbReference>
<dbReference type="Pfam" id="PF05922">
    <property type="entry name" value="Inhibitor_I9"/>
    <property type="match status" value="1"/>
</dbReference>
<dbReference type="Pfam" id="PF00082">
    <property type="entry name" value="Peptidase_S8"/>
    <property type="match status" value="1"/>
</dbReference>
<dbReference type="PRINTS" id="PR00723">
    <property type="entry name" value="SUBTILISIN"/>
</dbReference>
<dbReference type="SUPFAM" id="SSF54897">
    <property type="entry name" value="Protease propeptides/inhibitors"/>
    <property type="match status" value="1"/>
</dbReference>
<dbReference type="SUPFAM" id="SSF52743">
    <property type="entry name" value="Subtilisin-like"/>
    <property type="match status" value="1"/>
</dbReference>
<dbReference type="PROSITE" id="PS51892">
    <property type="entry name" value="SUBTILASE"/>
    <property type="match status" value="1"/>
</dbReference>
<dbReference type="PROSITE" id="PS00136">
    <property type="entry name" value="SUBTILASE_ASP"/>
    <property type="match status" value="1"/>
</dbReference>
<dbReference type="PROSITE" id="PS00137">
    <property type="entry name" value="SUBTILASE_HIS"/>
    <property type="match status" value="1"/>
</dbReference>
<dbReference type="PROSITE" id="PS00138">
    <property type="entry name" value="SUBTILASE_SER"/>
    <property type="match status" value="1"/>
</dbReference>